<accession>P68467</accession>
<accession>P18382</accession>
<feature type="chain" id="PRO_0000099608" description="Protein K7">
    <location>
        <begin position="1"/>
        <end position="149"/>
    </location>
</feature>
<proteinExistence type="evidence at protein level"/>
<dbReference type="EMBL" id="M35027">
    <property type="protein sequence ID" value="AAA48013.1"/>
    <property type="molecule type" value="Genomic_DNA"/>
</dbReference>
<dbReference type="PIR" id="JS0217">
    <property type="entry name" value="WMVZK7"/>
</dbReference>
<dbReference type="BMRB" id="P68467"/>
<dbReference type="SMR" id="P68467"/>
<dbReference type="IntAct" id="P68467">
    <property type="interactions" value="3"/>
</dbReference>
<dbReference type="MINT" id="P68467"/>
<dbReference type="Proteomes" id="UP000008269">
    <property type="component" value="Segment"/>
</dbReference>
<dbReference type="GO" id="GO:0030430">
    <property type="term" value="C:host cell cytoplasm"/>
    <property type="evidence" value="ECO:0007669"/>
    <property type="project" value="UniProtKB-SubCell"/>
</dbReference>
<dbReference type="GO" id="GO:0052170">
    <property type="term" value="P:symbiont-mediated suppression of host innate immune response"/>
    <property type="evidence" value="ECO:0007669"/>
    <property type="project" value="UniProtKB-KW"/>
</dbReference>
<dbReference type="Gene3D" id="1.10.437.20">
    <property type="entry name" value="dsDNA poxvirus"/>
    <property type="match status" value="1"/>
</dbReference>
<dbReference type="InterPro" id="IPR009174">
    <property type="entry name" value="Orthopox_K7"/>
</dbReference>
<dbReference type="InterPro" id="IPR022819">
    <property type="entry name" value="Poxvirus_Bcl-2-like"/>
</dbReference>
<dbReference type="InterPro" id="IPR043018">
    <property type="entry name" value="Poxvirus_sf"/>
</dbReference>
<dbReference type="Pfam" id="PF06227">
    <property type="entry name" value="Poxv_Bcl-2-like"/>
    <property type="match status" value="1"/>
</dbReference>
<dbReference type="PIRSF" id="PIRSF003764">
    <property type="entry name" value="VAC_K7R"/>
    <property type="match status" value="1"/>
</dbReference>
<organismHost>
    <name type="scientific">Homo sapiens</name>
    <name type="common">Human</name>
    <dbReference type="NCBI Taxonomy" id="9606"/>
</organismHost>
<name>PG044_VACCC</name>
<reference key="1">
    <citation type="journal article" date="1990" name="Virology">
        <title>The complete DNA sequence of vaccinia virus.</title>
        <authorList>
            <person name="Goebel S.J."/>
            <person name="Johnson G.P."/>
            <person name="Perkus M.E."/>
            <person name="Davis S.W."/>
            <person name="Winslow J.P."/>
            <person name="Paoletti E."/>
        </authorList>
    </citation>
    <scope>NUCLEOTIDE SEQUENCE [LARGE SCALE GENOMIC DNA]</scope>
</reference>
<reference key="2">
    <citation type="journal article" date="1990" name="Virology">
        <title>Appendix to 'The complete DNA sequence of vaccinia virus'.</title>
        <authorList>
            <person name="Goebel S.J."/>
            <person name="Johnson G.P."/>
            <person name="Perkus M.E."/>
            <person name="Davis S.W."/>
            <person name="Winslow J.P."/>
            <person name="Paoletti E."/>
        </authorList>
    </citation>
    <scope>NUCLEOTIDE SEQUENCE [LARGE SCALE GENOMIC DNA]</scope>
</reference>
<organism>
    <name type="scientific">Vaccinia virus (strain Copenhagen)</name>
    <name type="common">VACV</name>
    <dbReference type="NCBI Taxonomy" id="10249"/>
    <lineage>
        <taxon>Viruses</taxon>
        <taxon>Varidnaviria</taxon>
        <taxon>Bamfordvirae</taxon>
        <taxon>Nucleocytoviricota</taxon>
        <taxon>Pokkesviricetes</taxon>
        <taxon>Chitovirales</taxon>
        <taxon>Poxviridae</taxon>
        <taxon>Chordopoxvirinae</taxon>
        <taxon>Orthopoxvirus</taxon>
        <taxon>Vaccinia virus</taxon>
    </lineage>
</organism>
<gene>
    <name type="primary">OPG044</name>
    <name type="ORF">K7R</name>
</gene>
<protein>
    <recommendedName>
        <fullName>Protein K7</fullName>
    </recommendedName>
</protein>
<keyword id="KW-1035">Host cytoplasm</keyword>
<keyword id="KW-0945">Host-virus interaction</keyword>
<keyword id="KW-1090">Inhibition of host innate immune response by virus</keyword>
<keyword id="KW-1113">Inhibition of host RLR pathway by virus</keyword>
<keyword id="KW-1185">Reference proteome</keyword>
<keyword id="KW-0899">Viral immunoevasion</keyword>
<evidence type="ECO:0000250" key="1">
    <source>
        <dbReference type="UniProtKB" id="P68466"/>
    </source>
</evidence>
<evidence type="ECO:0000305" key="2"/>
<comment type="function">
    <text evidence="1">Virulence factor that affects the acute immune response to infection. Bcl-2-like protein which, through its interaction with the DEAD box RNA helicase DDX3X/DDX3, prevents TBK1/IKKepsilon-mediated IRF3 activation. Contributes to virulence by binding to the host TRAF6 and IRAK2 and preventing host NF-kappa-B activation.</text>
</comment>
<comment type="subunit">
    <text evidence="1">Interacts with DDX3; this interaction inhibits DDX3 and suppresses DDX3-mediated IFN-beta promoter induction. Interacts with TRAF6 and IRAK2; these interactions suppress TLR-dependent NF-KappaB activation.</text>
</comment>
<comment type="interaction">
    <interactant intactId="EBI-8022707">
        <id>P68467</id>
    </interactant>
    <interactant intactId="EBI-353779">
        <id>O00571</id>
        <label>DDX3X</label>
    </interactant>
    <organismsDiffer>true</organismsDiffer>
    <experiments>6</experiments>
</comment>
<comment type="interaction">
    <interactant intactId="EBI-8022707">
        <id>P68467</id>
    </interactant>
    <interactant intactId="EBI-447733">
        <id>O43187</id>
        <label>IRAK2</label>
    </interactant>
    <organismsDiffer>true</organismsDiffer>
    <experiments>2</experiments>
</comment>
<comment type="subcellular location">
    <subcellularLocation>
        <location evidence="1">Host cytoplasm</location>
    </subcellularLocation>
</comment>
<comment type="induction">
    <text evidence="1">Expressed in the early phase of the viral replicative cycle.</text>
</comment>
<comment type="similarity">
    <text evidence="2">Belongs to the orthopoxvirus OPG044 family.</text>
</comment>
<sequence>MATKLDYEDAVFYFVDDDKICSRDSIIDLIDEYITWRNHVIVFNKDITSCGRLYKELMKFDDVAIRYYGIDKINEIVEAMSEGDHYINFTKVHDQESLFATIGICAKITEHWGYKKISESRFQSLGNITDLMTDDNINILILFLEKKLN</sequence>